<comment type="function">
    <text evidence="1">Plays a role in viral cell-to-cell propagation, by facilitating genome transport to neighboring plant cells through plasmosdesmata. May induce the formation of granular vesicles derived from the Endoplasmic reticulum, which align on actin filaments (By similarity).</text>
</comment>
<comment type="subcellular location">
    <subcellularLocation>
        <location evidence="1">Host endoplasmic reticulum membrane</location>
    </subcellularLocation>
</comment>
<comment type="miscellaneous">
    <text>TGBp1, TGBp2 and TGBp3 seem to act together for cell-to-cell propagation. TGBp1 is the main movement protein that physically cross the plasmodesma with the viral genome. TGBp2 and TGBp3 would facilitate TGBp1 function.</text>
</comment>
<comment type="similarity">
    <text evidence="3">Belongs to the Tymovirales TGBp3 protein family.</text>
</comment>
<sequence>MHLAIVGALTLVLTLFVLHYTTKDDRCYILINGHSAFTNCPASPDLAKVISQLKPHNHG</sequence>
<name>TGB3_CYMV</name>
<organismHost>
    <name type="scientific">Chenopodium album</name>
    <name type="common">Fat hen</name>
    <dbReference type="NCBI Taxonomy" id="3559"/>
</organismHost>
<organismHost>
    <name type="scientific">Malus pumila</name>
    <name type="common">Paradise apple</name>
    <dbReference type="NCBI Taxonomy" id="283210"/>
</organismHost>
<organismHost>
    <name type="scientific">Medicago sativa</name>
    <name type="common">Alfalfa</name>
    <dbReference type="NCBI Taxonomy" id="3879"/>
</organismHost>
<organismHost>
    <name type="scientific">Pisum sativum</name>
    <name type="common">Garden pea</name>
    <name type="synonym">Lathyrus oleraceus</name>
    <dbReference type="NCBI Taxonomy" id="3888"/>
</organismHost>
<organismHost>
    <name type="scientific">Stellaria media</name>
    <name type="common">Common chickweed</name>
    <name type="synonym">Alsine media</name>
    <dbReference type="NCBI Taxonomy" id="13274"/>
</organismHost>
<organismHost>
    <name type="scientific">Trifolium</name>
    <dbReference type="NCBI Taxonomy" id="3898"/>
</organismHost>
<organismHost>
    <name type="scientific">Vicia sativa</name>
    <name type="common">Spring vetch</name>
    <name type="synonym">Tare</name>
    <dbReference type="NCBI Taxonomy" id="3908"/>
</organismHost>
<protein>
    <recommendedName>
        <fullName>Movement protein TGBp3</fullName>
    </recommendedName>
    <alternativeName>
        <fullName>7 kDa protein</fullName>
    </alternativeName>
    <alternativeName>
        <fullName>Triple gene block 3 protein</fullName>
        <shortName>TGBp3</shortName>
    </alternativeName>
</protein>
<proteinExistence type="inferred from homology"/>
<accession>P16483</accession>
<evidence type="ECO:0000250" key="1"/>
<evidence type="ECO:0000255" key="2"/>
<evidence type="ECO:0000305" key="3"/>
<reference key="1">
    <citation type="journal article" date="1989" name="J. Gen. Virol.">
        <title>Nucleotide sequence of the 3'-terminal region of clover yellow mosaic virus RNA.</title>
        <authorList>
            <person name="Abouhaidar M.G."/>
            <person name="Lai R."/>
        </authorList>
    </citation>
    <scope>NUCLEOTIDE SEQUENCE [GENOMIC RNA]</scope>
</reference>
<reference key="2">
    <citation type="journal article" date="2005" name="Mol. Plant Microbe Interact.">
        <title>A new cell-to-cell transport model for Potexviruses.</title>
        <authorList>
            <person name="Verchot-Lubicz J."/>
        </authorList>
    </citation>
    <scope>REVIEW</scope>
</reference>
<keyword id="KW-1038">Host endoplasmic reticulum</keyword>
<keyword id="KW-1043">Host membrane</keyword>
<keyword id="KW-0472">Membrane</keyword>
<keyword id="KW-0812">Transmembrane</keyword>
<keyword id="KW-1133">Transmembrane helix</keyword>
<keyword id="KW-0813">Transport</keyword>
<keyword id="KW-0916">Viral movement protein</keyword>
<organism>
    <name type="scientific">Clover yellow mosaic virus</name>
    <name type="common">CYMV</name>
    <dbReference type="NCBI Taxonomy" id="12177"/>
    <lineage>
        <taxon>Viruses</taxon>
        <taxon>Riboviria</taxon>
        <taxon>Orthornavirae</taxon>
        <taxon>Kitrinoviricota</taxon>
        <taxon>Alsuviricetes</taxon>
        <taxon>Tymovirales</taxon>
        <taxon>Alphaflexiviridae</taxon>
        <taxon>Potexvirus</taxon>
    </lineage>
</organism>
<gene>
    <name type="ORF">ORF4</name>
</gene>
<feature type="chain" id="PRO_0000222601" description="Movement protein TGBp3">
    <location>
        <begin position="1"/>
        <end position="59"/>
    </location>
</feature>
<feature type="topological domain" description="Lumenal" evidence="2">
    <location>
        <begin position="1"/>
        <end position="3"/>
    </location>
</feature>
<feature type="transmembrane region" description="Helical" evidence="2">
    <location>
        <begin position="4"/>
        <end position="21"/>
    </location>
</feature>
<feature type="topological domain" description="Cytoplasmic" evidence="2">
    <location>
        <begin position="22"/>
        <end position="59"/>
    </location>
</feature>
<dbReference type="EMBL" id="D00485">
    <property type="protein sequence ID" value="BAA00372.1"/>
    <property type="molecule type" value="Genomic_RNA"/>
</dbReference>
<dbReference type="PIR" id="JU0402">
    <property type="entry name" value="JU0402"/>
</dbReference>
<dbReference type="RefSeq" id="NP_077082.1">
    <property type="nucleotide sequence ID" value="NC_001753.1"/>
</dbReference>
<dbReference type="KEGG" id="vg:1494005"/>
<dbReference type="OrthoDB" id="29237at10239"/>
<dbReference type="GO" id="GO:0044167">
    <property type="term" value="C:host cell endoplasmic reticulum membrane"/>
    <property type="evidence" value="ECO:0007669"/>
    <property type="project" value="UniProtKB-SubCell"/>
</dbReference>
<dbReference type="GO" id="GO:0016020">
    <property type="term" value="C:membrane"/>
    <property type="evidence" value="ECO:0007669"/>
    <property type="project" value="UniProtKB-KW"/>
</dbReference>
<dbReference type="GO" id="GO:0046740">
    <property type="term" value="P:transport of virus in host, cell to cell"/>
    <property type="evidence" value="ECO:0007669"/>
    <property type="project" value="UniProtKB-KW"/>
</dbReference>
<dbReference type="InterPro" id="IPR003411">
    <property type="entry name" value="TGBp3"/>
</dbReference>
<dbReference type="Pfam" id="PF02495">
    <property type="entry name" value="TGBp3"/>
    <property type="match status" value="1"/>
</dbReference>